<feature type="chain" id="PRO_1000131873" description="Probable Fe(2+)-trafficking protein">
    <location>
        <begin position="1"/>
        <end position="90"/>
    </location>
</feature>
<sequence length="90" mass="10608">MSRTIFCTFLKKDAEGQDFQLYPGEIGKRIYNEISKEAWSQWITKQTMLINEKKLSMMNIEDRKLLEQEMVNFLFEGQDVHIAGYTPPSK</sequence>
<keyword id="KW-0408">Iron</keyword>
<evidence type="ECO:0000255" key="1">
    <source>
        <dbReference type="HAMAP-Rule" id="MF_00686"/>
    </source>
</evidence>
<reference key="1">
    <citation type="submission" date="2008-04" db="EMBL/GenBank/DDBJ databases">
        <title>Complete sequence of Yersinia pseudotuberculosis PB1/+.</title>
        <authorList>
            <person name="Copeland A."/>
            <person name="Lucas S."/>
            <person name="Lapidus A."/>
            <person name="Glavina del Rio T."/>
            <person name="Dalin E."/>
            <person name="Tice H."/>
            <person name="Bruce D."/>
            <person name="Goodwin L."/>
            <person name="Pitluck S."/>
            <person name="Munk A.C."/>
            <person name="Brettin T."/>
            <person name="Detter J.C."/>
            <person name="Han C."/>
            <person name="Tapia R."/>
            <person name="Schmutz J."/>
            <person name="Larimer F."/>
            <person name="Land M."/>
            <person name="Hauser L."/>
            <person name="Challacombe J.F."/>
            <person name="Green L."/>
            <person name="Lindler L.E."/>
            <person name="Nikolich M.P."/>
            <person name="Richardson P."/>
        </authorList>
    </citation>
    <scope>NUCLEOTIDE SEQUENCE [LARGE SCALE GENOMIC DNA]</scope>
    <source>
        <strain>PB1/+</strain>
    </source>
</reference>
<protein>
    <recommendedName>
        <fullName evidence="1">Probable Fe(2+)-trafficking protein</fullName>
    </recommendedName>
</protein>
<name>FETP_YERPB</name>
<proteinExistence type="inferred from homology"/>
<organism>
    <name type="scientific">Yersinia pseudotuberculosis serotype IB (strain PB1/+)</name>
    <dbReference type="NCBI Taxonomy" id="502801"/>
    <lineage>
        <taxon>Bacteria</taxon>
        <taxon>Pseudomonadati</taxon>
        <taxon>Pseudomonadota</taxon>
        <taxon>Gammaproteobacteria</taxon>
        <taxon>Enterobacterales</taxon>
        <taxon>Yersiniaceae</taxon>
        <taxon>Yersinia</taxon>
    </lineage>
</organism>
<gene>
    <name type="ordered locus">YPTS_3359</name>
</gene>
<accession>B2K0V1</accession>
<dbReference type="EMBL" id="CP001048">
    <property type="protein sequence ID" value="ACC90314.1"/>
    <property type="molecule type" value="Genomic_DNA"/>
</dbReference>
<dbReference type="RefSeq" id="WP_002230648.1">
    <property type="nucleotide sequence ID" value="NZ_CP009780.1"/>
</dbReference>
<dbReference type="SMR" id="B2K0V1"/>
<dbReference type="KEGG" id="ypb:YPTS_3359"/>
<dbReference type="PATRIC" id="fig|502801.10.peg.2799"/>
<dbReference type="GO" id="GO:0005829">
    <property type="term" value="C:cytosol"/>
    <property type="evidence" value="ECO:0007669"/>
    <property type="project" value="TreeGrafter"/>
</dbReference>
<dbReference type="GO" id="GO:0005506">
    <property type="term" value="F:iron ion binding"/>
    <property type="evidence" value="ECO:0007669"/>
    <property type="project" value="UniProtKB-UniRule"/>
</dbReference>
<dbReference type="GO" id="GO:0034599">
    <property type="term" value="P:cellular response to oxidative stress"/>
    <property type="evidence" value="ECO:0007669"/>
    <property type="project" value="TreeGrafter"/>
</dbReference>
<dbReference type="FunFam" id="1.10.3880.10:FF:000001">
    <property type="entry name" value="Probable Fe(2+)-trafficking protein"/>
    <property type="match status" value="1"/>
</dbReference>
<dbReference type="Gene3D" id="1.10.3880.10">
    <property type="entry name" value="Fe(II) trafficking protein YggX"/>
    <property type="match status" value="1"/>
</dbReference>
<dbReference type="HAMAP" id="MF_00686">
    <property type="entry name" value="Fe_traffic_YggX"/>
    <property type="match status" value="1"/>
</dbReference>
<dbReference type="InterPro" id="IPR007457">
    <property type="entry name" value="Fe_traffick_prot_YggX"/>
</dbReference>
<dbReference type="InterPro" id="IPR036766">
    <property type="entry name" value="Fe_traffick_prot_YggX_sf"/>
</dbReference>
<dbReference type="NCBIfam" id="NF003817">
    <property type="entry name" value="PRK05408.1"/>
    <property type="match status" value="1"/>
</dbReference>
<dbReference type="PANTHER" id="PTHR36965">
    <property type="entry name" value="FE(2+)-TRAFFICKING PROTEIN-RELATED"/>
    <property type="match status" value="1"/>
</dbReference>
<dbReference type="PANTHER" id="PTHR36965:SF1">
    <property type="entry name" value="FE(2+)-TRAFFICKING PROTEIN-RELATED"/>
    <property type="match status" value="1"/>
</dbReference>
<dbReference type="Pfam" id="PF04362">
    <property type="entry name" value="Iron_traffic"/>
    <property type="match status" value="1"/>
</dbReference>
<dbReference type="PIRSF" id="PIRSF029827">
    <property type="entry name" value="Fe_traffic_YggX"/>
    <property type="match status" value="1"/>
</dbReference>
<dbReference type="SUPFAM" id="SSF111148">
    <property type="entry name" value="YggX-like"/>
    <property type="match status" value="1"/>
</dbReference>
<comment type="function">
    <text evidence="1">Could be a mediator in iron transactions between iron acquisition and iron-requiring processes, such as synthesis and/or repair of Fe-S clusters in biosynthetic enzymes.</text>
</comment>
<comment type="subunit">
    <text evidence="1">Monomer.</text>
</comment>
<comment type="similarity">
    <text evidence="1">Belongs to the Fe(2+)-trafficking protein family.</text>
</comment>